<accession>B1JBE6</accession>
<organism>
    <name type="scientific">Pseudomonas putida (strain W619)</name>
    <dbReference type="NCBI Taxonomy" id="390235"/>
    <lineage>
        <taxon>Bacteria</taxon>
        <taxon>Pseudomonadati</taxon>
        <taxon>Pseudomonadota</taxon>
        <taxon>Gammaproteobacteria</taxon>
        <taxon>Pseudomonadales</taxon>
        <taxon>Pseudomonadaceae</taxon>
        <taxon>Pseudomonas</taxon>
    </lineage>
</organism>
<dbReference type="EC" id="2.3.2.29" evidence="1"/>
<dbReference type="EMBL" id="CP000949">
    <property type="protein sequence ID" value="ACA73894.1"/>
    <property type="molecule type" value="Genomic_DNA"/>
</dbReference>
<dbReference type="SMR" id="B1JBE6"/>
<dbReference type="STRING" id="390235.PputW619_3410"/>
<dbReference type="KEGG" id="ppw:PputW619_3410"/>
<dbReference type="eggNOG" id="COG2935">
    <property type="taxonomic scope" value="Bacteria"/>
</dbReference>
<dbReference type="HOGENOM" id="CLU_077607_0_0_6"/>
<dbReference type="OrthoDB" id="9782022at2"/>
<dbReference type="GO" id="GO:0005737">
    <property type="term" value="C:cytoplasm"/>
    <property type="evidence" value="ECO:0007669"/>
    <property type="project" value="UniProtKB-SubCell"/>
</dbReference>
<dbReference type="GO" id="GO:0004057">
    <property type="term" value="F:arginyl-tRNA--protein transferase activity"/>
    <property type="evidence" value="ECO:0007669"/>
    <property type="project" value="InterPro"/>
</dbReference>
<dbReference type="GO" id="GO:0008914">
    <property type="term" value="F:leucyl-tRNA--protein transferase activity"/>
    <property type="evidence" value="ECO:0007669"/>
    <property type="project" value="UniProtKB-UniRule"/>
</dbReference>
<dbReference type="GO" id="GO:0071596">
    <property type="term" value="P:ubiquitin-dependent protein catabolic process via the N-end rule pathway"/>
    <property type="evidence" value="ECO:0007669"/>
    <property type="project" value="InterPro"/>
</dbReference>
<dbReference type="HAMAP" id="MF_00689">
    <property type="entry name" value="Bpt"/>
    <property type="match status" value="1"/>
</dbReference>
<dbReference type="InterPro" id="IPR016181">
    <property type="entry name" value="Acyl_CoA_acyltransferase"/>
</dbReference>
<dbReference type="InterPro" id="IPR017138">
    <property type="entry name" value="Asp_Glu_LeuTrfase"/>
</dbReference>
<dbReference type="InterPro" id="IPR030700">
    <property type="entry name" value="N-end_Aminoacyl_Trfase"/>
</dbReference>
<dbReference type="InterPro" id="IPR007472">
    <property type="entry name" value="N-end_Aminoacyl_Trfase_C"/>
</dbReference>
<dbReference type="InterPro" id="IPR007471">
    <property type="entry name" value="N-end_Aminoacyl_Trfase_N"/>
</dbReference>
<dbReference type="NCBIfam" id="NF002341">
    <property type="entry name" value="PRK01305.1-1"/>
    <property type="match status" value="1"/>
</dbReference>
<dbReference type="NCBIfam" id="NF002342">
    <property type="entry name" value="PRK01305.1-3"/>
    <property type="match status" value="1"/>
</dbReference>
<dbReference type="NCBIfam" id="NF002345">
    <property type="entry name" value="PRK01305.2-2"/>
    <property type="match status" value="1"/>
</dbReference>
<dbReference type="NCBIfam" id="NF002346">
    <property type="entry name" value="PRK01305.2-3"/>
    <property type="match status" value="1"/>
</dbReference>
<dbReference type="PANTHER" id="PTHR21367">
    <property type="entry name" value="ARGININE-TRNA-PROTEIN TRANSFERASE 1"/>
    <property type="match status" value="1"/>
</dbReference>
<dbReference type="PANTHER" id="PTHR21367:SF1">
    <property type="entry name" value="ARGINYL-TRNA--PROTEIN TRANSFERASE 1"/>
    <property type="match status" value="1"/>
</dbReference>
<dbReference type="Pfam" id="PF04377">
    <property type="entry name" value="ATE_C"/>
    <property type="match status" value="1"/>
</dbReference>
<dbReference type="Pfam" id="PF04376">
    <property type="entry name" value="ATE_N"/>
    <property type="match status" value="1"/>
</dbReference>
<dbReference type="PIRSF" id="PIRSF037208">
    <property type="entry name" value="ATE_pro_prd"/>
    <property type="match status" value="1"/>
</dbReference>
<dbReference type="SUPFAM" id="SSF55729">
    <property type="entry name" value="Acyl-CoA N-acyltransferases (Nat)"/>
    <property type="match status" value="1"/>
</dbReference>
<keyword id="KW-0012">Acyltransferase</keyword>
<keyword id="KW-0963">Cytoplasm</keyword>
<keyword id="KW-0808">Transferase</keyword>
<sequence length="235" mass="27786">MTELARLKFYATQPHSCSYLPDEQATTLFLDPSQPMDVHVYADLSEMGFRRSGDHLYRPHCQNCNACVPARIPAARFIPNRQQRRILKRNADLTVTAARPAFKEEYFDLYRRYIETRHADGDMYPPSRDQFSTFLVRDLPFCWFYEFRLAGRLLAVAVCDLLPNGLSAVYTFYEPDEERRSLGRFAILWQITEALRQDLEAVYLGYWIKNCKKMNYKTQYRPIELLINQRWVTLN</sequence>
<proteinExistence type="inferred from homology"/>
<gene>
    <name evidence="1" type="primary">bpt</name>
    <name type="ordered locus">PputW619_3410</name>
</gene>
<feature type="chain" id="PRO_1000131992" description="Aspartate/glutamate leucyltransferase">
    <location>
        <begin position="1"/>
        <end position="235"/>
    </location>
</feature>
<name>BPT_PSEPW</name>
<comment type="function">
    <text evidence="1">Functions in the N-end rule pathway of protein degradation where it conjugates Leu from its aminoacyl-tRNA to the N-termini of proteins containing an N-terminal aspartate or glutamate.</text>
</comment>
<comment type="catalytic activity">
    <reaction evidence="1">
        <text>N-terminal L-glutamyl-[protein] + L-leucyl-tRNA(Leu) = N-terminal L-leucyl-L-glutamyl-[protein] + tRNA(Leu) + H(+)</text>
        <dbReference type="Rhea" id="RHEA:50412"/>
        <dbReference type="Rhea" id="RHEA-COMP:9613"/>
        <dbReference type="Rhea" id="RHEA-COMP:9622"/>
        <dbReference type="Rhea" id="RHEA-COMP:12664"/>
        <dbReference type="Rhea" id="RHEA-COMP:12668"/>
        <dbReference type="ChEBI" id="CHEBI:15378"/>
        <dbReference type="ChEBI" id="CHEBI:64721"/>
        <dbReference type="ChEBI" id="CHEBI:78442"/>
        <dbReference type="ChEBI" id="CHEBI:78494"/>
        <dbReference type="ChEBI" id="CHEBI:133041"/>
        <dbReference type="EC" id="2.3.2.29"/>
    </reaction>
</comment>
<comment type="catalytic activity">
    <reaction evidence="1">
        <text>N-terminal L-aspartyl-[protein] + L-leucyl-tRNA(Leu) = N-terminal L-leucyl-L-aspartyl-[protein] + tRNA(Leu) + H(+)</text>
        <dbReference type="Rhea" id="RHEA:50420"/>
        <dbReference type="Rhea" id="RHEA-COMP:9613"/>
        <dbReference type="Rhea" id="RHEA-COMP:9622"/>
        <dbReference type="Rhea" id="RHEA-COMP:12669"/>
        <dbReference type="Rhea" id="RHEA-COMP:12674"/>
        <dbReference type="ChEBI" id="CHEBI:15378"/>
        <dbReference type="ChEBI" id="CHEBI:64720"/>
        <dbReference type="ChEBI" id="CHEBI:78442"/>
        <dbReference type="ChEBI" id="CHEBI:78494"/>
        <dbReference type="ChEBI" id="CHEBI:133042"/>
        <dbReference type="EC" id="2.3.2.29"/>
    </reaction>
</comment>
<comment type="subcellular location">
    <subcellularLocation>
        <location evidence="1">Cytoplasm</location>
    </subcellularLocation>
</comment>
<comment type="similarity">
    <text evidence="1">Belongs to the R-transferase family. Bpt subfamily.</text>
</comment>
<evidence type="ECO:0000255" key="1">
    <source>
        <dbReference type="HAMAP-Rule" id="MF_00689"/>
    </source>
</evidence>
<reference key="1">
    <citation type="submission" date="2008-02" db="EMBL/GenBank/DDBJ databases">
        <title>Complete sequence of Pseudomonas putida W619.</title>
        <authorList>
            <person name="Copeland A."/>
            <person name="Lucas S."/>
            <person name="Lapidus A."/>
            <person name="Barry K."/>
            <person name="Detter J.C."/>
            <person name="Glavina del Rio T."/>
            <person name="Dalin E."/>
            <person name="Tice H."/>
            <person name="Pitluck S."/>
            <person name="Chain P."/>
            <person name="Malfatti S."/>
            <person name="Shin M."/>
            <person name="Vergez L."/>
            <person name="Schmutz J."/>
            <person name="Larimer F."/>
            <person name="Land M."/>
            <person name="Hauser L."/>
            <person name="Kyrpides N."/>
            <person name="Kim E."/>
            <person name="Taghavi S."/>
            <person name="Vangronsveld D."/>
            <person name="van der Lelie D."/>
            <person name="Richardson P."/>
        </authorList>
    </citation>
    <scope>NUCLEOTIDE SEQUENCE [LARGE SCALE GENOMIC DNA]</scope>
    <source>
        <strain>W619</strain>
    </source>
</reference>
<protein>
    <recommendedName>
        <fullName evidence="1">Aspartate/glutamate leucyltransferase</fullName>
        <ecNumber evidence="1">2.3.2.29</ecNumber>
    </recommendedName>
</protein>